<gene>
    <name type="primary">PDX1</name>
</gene>
<evidence type="ECO:0000250" key="1">
    <source>
        <dbReference type="UniProtKB" id="O59080"/>
    </source>
</evidence>
<evidence type="ECO:0000250" key="2">
    <source>
        <dbReference type="UniProtKB" id="O80448"/>
    </source>
</evidence>
<evidence type="ECO:0000250" key="3">
    <source>
        <dbReference type="UniProtKB" id="Q03148"/>
    </source>
</evidence>
<evidence type="ECO:0000305" key="4"/>
<dbReference type="EC" id="4.3.3.6"/>
<dbReference type="EMBL" id="AF344827">
    <property type="protein sequence ID" value="AAK18310.1"/>
    <property type="molecule type" value="mRNA"/>
</dbReference>
<dbReference type="UniPathway" id="UPA00245"/>
<dbReference type="GO" id="GO:0036381">
    <property type="term" value="F:pyridoxal 5'-phosphate synthase (glutamine hydrolysing) activity"/>
    <property type="evidence" value="ECO:0007669"/>
    <property type="project" value="UniProtKB-EC"/>
</dbReference>
<dbReference type="GO" id="GO:0006520">
    <property type="term" value="P:amino acid metabolic process"/>
    <property type="evidence" value="ECO:0007669"/>
    <property type="project" value="TreeGrafter"/>
</dbReference>
<dbReference type="GO" id="GO:0042823">
    <property type="term" value="P:pyridoxal phosphate biosynthetic process"/>
    <property type="evidence" value="ECO:0007669"/>
    <property type="project" value="UniProtKB-UniPathway"/>
</dbReference>
<dbReference type="GO" id="GO:0008615">
    <property type="term" value="P:pyridoxine biosynthetic process"/>
    <property type="evidence" value="ECO:0007669"/>
    <property type="project" value="TreeGrafter"/>
</dbReference>
<dbReference type="CDD" id="cd04727">
    <property type="entry name" value="pdxS"/>
    <property type="match status" value="1"/>
</dbReference>
<dbReference type="FunFam" id="3.20.20.70:FF:000001">
    <property type="entry name" value="Pyridoxine biosynthesis protein PDX1"/>
    <property type="match status" value="1"/>
</dbReference>
<dbReference type="Gene3D" id="3.20.20.70">
    <property type="entry name" value="Aldolase class I"/>
    <property type="match status" value="1"/>
</dbReference>
<dbReference type="HAMAP" id="MF_01824">
    <property type="entry name" value="PdxS"/>
    <property type="match status" value="1"/>
</dbReference>
<dbReference type="InterPro" id="IPR013785">
    <property type="entry name" value="Aldolase_TIM"/>
</dbReference>
<dbReference type="InterPro" id="IPR001852">
    <property type="entry name" value="PdxS/SNZ"/>
</dbReference>
<dbReference type="InterPro" id="IPR033755">
    <property type="entry name" value="PdxS/SNZ_N"/>
</dbReference>
<dbReference type="InterPro" id="IPR011060">
    <property type="entry name" value="RibuloseP-bd_barrel"/>
</dbReference>
<dbReference type="NCBIfam" id="NF003215">
    <property type="entry name" value="PRK04180.1"/>
    <property type="match status" value="1"/>
</dbReference>
<dbReference type="NCBIfam" id="TIGR00343">
    <property type="entry name" value="pyridoxal 5'-phosphate synthase lyase subunit PdxS"/>
    <property type="match status" value="1"/>
</dbReference>
<dbReference type="PANTHER" id="PTHR31829">
    <property type="entry name" value="PYRIDOXAL 5'-PHOSPHATE SYNTHASE SUBUNIT SNZ1-RELATED"/>
    <property type="match status" value="1"/>
</dbReference>
<dbReference type="PANTHER" id="PTHR31829:SF0">
    <property type="entry name" value="PYRIDOXAL 5'-PHOSPHATE SYNTHASE SUBUNIT SNZ1-RELATED"/>
    <property type="match status" value="1"/>
</dbReference>
<dbReference type="Pfam" id="PF01680">
    <property type="entry name" value="SOR_SNZ"/>
    <property type="match status" value="1"/>
</dbReference>
<dbReference type="PIRSF" id="PIRSF029271">
    <property type="entry name" value="Pdx1"/>
    <property type="match status" value="1"/>
</dbReference>
<dbReference type="SUPFAM" id="SSF51366">
    <property type="entry name" value="Ribulose-phoshate binding barrel"/>
    <property type="match status" value="1"/>
</dbReference>
<dbReference type="PROSITE" id="PS01235">
    <property type="entry name" value="PDXS_SNZ_1"/>
    <property type="match status" value="1"/>
</dbReference>
<dbReference type="PROSITE" id="PS51129">
    <property type="entry name" value="PDXS_SNZ_2"/>
    <property type="match status" value="1"/>
</dbReference>
<organism>
    <name type="scientific">Ginkgo biloba</name>
    <name type="common">Ginkgo</name>
    <name type="synonym">Maidenhair tree</name>
    <dbReference type="NCBI Taxonomy" id="3311"/>
    <lineage>
        <taxon>Eukaryota</taxon>
        <taxon>Viridiplantae</taxon>
        <taxon>Streptophyta</taxon>
        <taxon>Embryophyta</taxon>
        <taxon>Tracheophyta</taxon>
        <taxon>Spermatophyta</taxon>
        <taxon>Ginkgoidae</taxon>
        <taxon>Ginkgoales</taxon>
        <taxon>Ginkgoaceae</taxon>
        <taxon>Ginkgo</taxon>
    </lineage>
</organism>
<sequence>MASDGVVTVYGDGAITDTKVSSYAVKVGLAQMLRGGVIMDVVNAEQARIAEEAGATAVMALERVPADIRAQGGVARMSDPGLIKEIKSAVTIPVMAKARIGHFVEAQILEAIGIDYIDESEVLTPADDXHHINKHNFRIPFVCGCRNLGEALRRIAEGAAMIRTKGEAGTGNVIEAVRHVRSVLGDIRKLQSLDDDEVFAFAKQIAAPYELVRQTKQLGRLPVVNFAAGGVATPADAALMMQLGCDGVFVGSGVFKSGDPARRARAIVQAVTHYNDPHILAEVSCSLGEAMVGINLKDEKVERYAERSE</sequence>
<comment type="function">
    <text evidence="2">Catalyzes the formation of pyridoxal 5'-phosphate from ribose 5-phosphate (RBP), glyceraldehyde 3-phosphate (G3P) and ammonia. The ammonia is provided by PDX2. Can also use ribulose 5-phosphate and dihydroxyacetone phosphate as substrates, resulting from enzyme-catalyzed isomerization of RBP and G3P, respectively. Also plays an indirect role in resistance to singlet oxygen-generating photosensitizers.</text>
</comment>
<comment type="catalytic activity">
    <reaction evidence="3">
        <text>aldehydo-D-ribose 5-phosphate + D-glyceraldehyde 3-phosphate + L-glutamine = pyridoxal 5'-phosphate + L-glutamate + phosphate + 3 H2O + H(+)</text>
        <dbReference type="Rhea" id="RHEA:31507"/>
        <dbReference type="ChEBI" id="CHEBI:15377"/>
        <dbReference type="ChEBI" id="CHEBI:15378"/>
        <dbReference type="ChEBI" id="CHEBI:29985"/>
        <dbReference type="ChEBI" id="CHEBI:43474"/>
        <dbReference type="ChEBI" id="CHEBI:58273"/>
        <dbReference type="ChEBI" id="CHEBI:58359"/>
        <dbReference type="ChEBI" id="CHEBI:59776"/>
        <dbReference type="ChEBI" id="CHEBI:597326"/>
        <dbReference type="EC" id="4.3.3.6"/>
    </reaction>
</comment>
<comment type="pathway">
    <text>Cofactor biosynthesis; pyridoxal 5'-phosphate biosynthesis.</text>
</comment>
<comment type="miscellaneous">
    <text>Vitamin B6 is an essential quencher of singlet oxygen in plants, that can protect cellular membranes from lipid peroxidation.</text>
</comment>
<comment type="similarity">
    <text evidence="4">Belongs to the PdxS/SNZ family.</text>
</comment>
<proteinExistence type="evidence at transcript level"/>
<name>PDX1_GINBI</name>
<feature type="chain" id="PRO_0000109370" description="Probable pyridoxal 5'-phosphate synthase subunit PDX1">
    <location>
        <begin position="1"/>
        <end position="309"/>
    </location>
</feature>
<feature type="active site" description="Schiff-base intermediate with D-ribose 5-phosphate" evidence="1">
    <location>
        <position position="97"/>
    </location>
</feature>
<feature type="binding site" evidence="1">
    <location>
        <position position="40"/>
    </location>
    <ligand>
        <name>D-ribose 5-phosphate</name>
        <dbReference type="ChEBI" id="CHEBI:78346"/>
    </ligand>
</feature>
<feature type="binding site" evidence="1">
    <location>
        <position position="169"/>
    </location>
    <ligand>
        <name>D-ribose 5-phosphate</name>
        <dbReference type="ChEBI" id="CHEBI:78346"/>
    </ligand>
</feature>
<feature type="binding site" evidence="3">
    <location>
        <position position="181"/>
    </location>
    <ligand>
        <name>D-glyceraldehyde 3-phosphate</name>
        <dbReference type="ChEBI" id="CHEBI:59776"/>
    </ligand>
</feature>
<feature type="binding site" evidence="1">
    <location>
        <position position="230"/>
    </location>
    <ligand>
        <name>D-ribose 5-phosphate</name>
        <dbReference type="ChEBI" id="CHEBI:78346"/>
    </ligand>
</feature>
<feature type="binding site" evidence="1">
    <location>
        <begin position="251"/>
        <end position="252"/>
    </location>
    <ligand>
        <name>D-ribose 5-phosphate</name>
        <dbReference type="ChEBI" id="CHEBI:78346"/>
    </ligand>
</feature>
<protein>
    <recommendedName>
        <fullName>Probable pyridoxal 5'-phosphate synthase subunit PDX1</fullName>
        <shortName>PLP synthase subunit PDX1</shortName>
        <ecNumber>4.3.3.6</ecNumber>
    </recommendedName>
    <alternativeName>
        <fullName>Sor-like protein</fullName>
    </alternativeName>
</protein>
<reference key="1">
    <citation type="submission" date="2001-02" db="EMBL/GenBank/DDBJ databases">
        <title>Cloning and sequencing of a sor-like sequence very likely involved in vitamin B6 biosynthesis in Ginkgo biloba L.</title>
        <authorList>
            <person name="Genau A."/>
            <person name="Drewke C."/>
            <person name="Leistner E."/>
        </authorList>
    </citation>
    <scope>NUCLEOTIDE SEQUENCE [MRNA]</scope>
</reference>
<accession>Q9AT63</accession>
<keyword id="KW-0456">Lyase</keyword>
<keyword id="KW-0663">Pyridoxal phosphate</keyword>
<keyword id="KW-0704">Schiff base</keyword>